<keyword id="KW-0131">Cell cycle</keyword>
<keyword id="KW-0132">Cell division</keyword>
<keyword id="KW-0175">Coiled coil</keyword>
<keyword id="KW-0963">Cytoplasm</keyword>
<keyword id="KW-0717">Septation</keyword>
<gene>
    <name evidence="1" type="primary">zapA</name>
    <name type="ordered locus">SNSL254_A3296</name>
</gene>
<protein>
    <recommendedName>
        <fullName evidence="1">Cell division protein ZapA</fullName>
    </recommendedName>
    <alternativeName>
        <fullName evidence="1">Z ring-associated protein ZapA</fullName>
    </alternativeName>
</protein>
<organism>
    <name type="scientific">Salmonella newport (strain SL254)</name>
    <dbReference type="NCBI Taxonomy" id="423368"/>
    <lineage>
        <taxon>Bacteria</taxon>
        <taxon>Pseudomonadati</taxon>
        <taxon>Pseudomonadota</taxon>
        <taxon>Gammaproteobacteria</taxon>
        <taxon>Enterobacterales</taxon>
        <taxon>Enterobacteriaceae</taxon>
        <taxon>Salmonella</taxon>
    </lineage>
</organism>
<name>ZAPA_SALNS</name>
<proteinExistence type="inferred from homology"/>
<reference key="1">
    <citation type="journal article" date="2011" name="J. Bacteriol.">
        <title>Comparative genomics of 28 Salmonella enterica isolates: evidence for CRISPR-mediated adaptive sublineage evolution.</title>
        <authorList>
            <person name="Fricke W.F."/>
            <person name="Mammel M.K."/>
            <person name="McDermott P.F."/>
            <person name="Tartera C."/>
            <person name="White D.G."/>
            <person name="Leclerc J.E."/>
            <person name="Ravel J."/>
            <person name="Cebula T.A."/>
        </authorList>
    </citation>
    <scope>NUCLEOTIDE SEQUENCE [LARGE SCALE GENOMIC DNA]</scope>
    <source>
        <strain>SL254</strain>
    </source>
</reference>
<accession>B4T556</accession>
<sequence length="109" mass="12523">MSAQPVDIQIFGRSLRVNCPPDQRDALNQAADDLNQRLQDLKVRTRVTNTEQLVFIAALNISYELTQEKAKTRDYAASMEQRIRMLQQTIEQALLDQGRITEKTGQNFE</sequence>
<dbReference type="EMBL" id="CP001113">
    <property type="protein sequence ID" value="ACF64035.1"/>
    <property type="molecule type" value="Genomic_DNA"/>
</dbReference>
<dbReference type="RefSeq" id="WP_001276011.1">
    <property type="nucleotide sequence ID" value="NZ_CCMR01000001.1"/>
</dbReference>
<dbReference type="SMR" id="B4T556"/>
<dbReference type="GeneID" id="66757358"/>
<dbReference type="KEGG" id="see:SNSL254_A3296"/>
<dbReference type="HOGENOM" id="CLU_116623_3_0_6"/>
<dbReference type="Proteomes" id="UP000008824">
    <property type="component" value="Chromosome"/>
</dbReference>
<dbReference type="GO" id="GO:0032153">
    <property type="term" value="C:cell division site"/>
    <property type="evidence" value="ECO:0007669"/>
    <property type="project" value="TreeGrafter"/>
</dbReference>
<dbReference type="GO" id="GO:0030428">
    <property type="term" value="C:cell septum"/>
    <property type="evidence" value="ECO:0007669"/>
    <property type="project" value="TreeGrafter"/>
</dbReference>
<dbReference type="GO" id="GO:0005829">
    <property type="term" value="C:cytosol"/>
    <property type="evidence" value="ECO:0007669"/>
    <property type="project" value="TreeGrafter"/>
</dbReference>
<dbReference type="GO" id="GO:0005886">
    <property type="term" value="C:plasma membrane"/>
    <property type="evidence" value="ECO:0007669"/>
    <property type="project" value="UniProtKB-UniRule"/>
</dbReference>
<dbReference type="GO" id="GO:0000917">
    <property type="term" value="P:division septum assembly"/>
    <property type="evidence" value="ECO:0007669"/>
    <property type="project" value="UniProtKB-KW"/>
</dbReference>
<dbReference type="GO" id="GO:0043093">
    <property type="term" value="P:FtsZ-dependent cytokinesis"/>
    <property type="evidence" value="ECO:0007669"/>
    <property type="project" value="TreeGrafter"/>
</dbReference>
<dbReference type="GO" id="GO:0000921">
    <property type="term" value="P:septin ring assembly"/>
    <property type="evidence" value="ECO:0007669"/>
    <property type="project" value="TreeGrafter"/>
</dbReference>
<dbReference type="FunFam" id="1.20.5.50:FF:000001">
    <property type="entry name" value="Cell division protein ZapA"/>
    <property type="match status" value="1"/>
</dbReference>
<dbReference type="FunFam" id="3.30.160.880:FF:000001">
    <property type="entry name" value="Cell division protein ZapA"/>
    <property type="match status" value="1"/>
</dbReference>
<dbReference type="Gene3D" id="1.20.5.50">
    <property type="match status" value="1"/>
</dbReference>
<dbReference type="Gene3D" id="3.30.160.880">
    <property type="entry name" value="Cell division protein ZapA protomer, N-terminal domain"/>
    <property type="match status" value="1"/>
</dbReference>
<dbReference type="HAMAP" id="MF_02012">
    <property type="entry name" value="ZapA_type1"/>
    <property type="match status" value="1"/>
</dbReference>
<dbReference type="InterPro" id="IPR007838">
    <property type="entry name" value="Cell_div_ZapA-like"/>
</dbReference>
<dbReference type="InterPro" id="IPR036192">
    <property type="entry name" value="Cell_div_ZapA-like_sf"/>
</dbReference>
<dbReference type="InterPro" id="IPR023771">
    <property type="entry name" value="Cell_div_ZapA_eubact"/>
</dbReference>
<dbReference type="InterPro" id="IPR042233">
    <property type="entry name" value="Cell_div_ZapA_N"/>
</dbReference>
<dbReference type="NCBIfam" id="NF008209">
    <property type="entry name" value="PRK10972.1"/>
    <property type="match status" value="1"/>
</dbReference>
<dbReference type="PANTHER" id="PTHR34981">
    <property type="entry name" value="CELL DIVISION PROTEIN ZAPA"/>
    <property type="match status" value="1"/>
</dbReference>
<dbReference type="PANTHER" id="PTHR34981:SF1">
    <property type="entry name" value="CELL DIVISION PROTEIN ZAPA"/>
    <property type="match status" value="1"/>
</dbReference>
<dbReference type="Pfam" id="PF05164">
    <property type="entry name" value="ZapA"/>
    <property type="match status" value="1"/>
</dbReference>
<dbReference type="SUPFAM" id="SSF102829">
    <property type="entry name" value="Cell division protein ZapA-like"/>
    <property type="match status" value="1"/>
</dbReference>
<comment type="function">
    <text evidence="1">Activator of cell division through the inhibition of FtsZ GTPase activity, therefore promoting FtsZ assembly into bundles of protofilaments necessary for the formation of the division Z ring. It is recruited early at mid-cell but it is not essential for cell division.</text>
</comment>
<comment type="subunit">
    <text evidence="1">Homodimer. Interacts with FtsZ.</text>
</comment>
<comment type="subcellular location">
    <subcellularLocation>
        <location evidence="1">Cytoplasm</location>
    </subcellularLocation>
    <text evidence="1">Localizes at mid-cell.</text>
</comment>
<comment type="similarity">
    <text evidence="1">Belongs to the ZapA family. Type 1 subfamily.</text>
</comment>
<feature type="chain" id="PRO_1000189522" description="Cell division protein ZapA">
    <location>
        <begin position="1"/>
        <end position="109"/>
    </location>
</feature>
<feature type="coiled-coil region" evidence="1">
    <location>
        <begin position="21"/>
        <end position="97"/>
    </location>
</feature>
<evidence type="ECO:0000255" key="1">
    <source>
        <dbReference type="HAMAP-Rule" id="MF_02012"/>
    </source>
</evidence>